<gene>
    <name type="primary">lysX</name>
    <name type="ordered locus">STK_01920</name>
</gene>
<keyword id="KW-0028">Amino-acid biosynthesis</keyword>
<keyword id="KW-0067">ATP-binding</keyword>
<keyword id="KW-0436">Ligase</keyword>
<keyword id="KW-0457">Lysine biosynthesis</keyword>
<keyword id="KW-0460">Magnesium</keyword>
<keyword id="KW-0479">Metal-binding</keyword>
<keyword id="KW-0547">Nucleotide-binding</keyword>
<keyword id="KW-1185">Reference proteome</keyword>
<evidence type="ECO:0000250" key="1"/>
<evidence type="ECO:0000250" key="2">
    <source>
        <dbReference type="UniProtKB" id="Q4JAP9"/>
    </source>
</evidence>
<evidence type="ECO:0000255" key="3">
    <source>
        <dbReference type="PROSITE-ProRule" id="PRU00409"/>
    </source>
</evidence>
<evidence type="ECO:0000305" key="4"/>
<reference key="1">
    <citation type="journal article" date="2001" name="DNA Res.">
        <title>Complete genome sequence of an aerobic thermoacidophilic Crenarchaeon, Sulfolobus tokodaii strain7.</title>
        <authorList>
            <person name="Kawarabayasi Y."/>
            <person name="Hino Y."/>
            <person name="Horikawa H."/>
            <person name="Jin-no K."/>
            <person name="Takahashi M."/>
            <person name="Sekine M."/>
            <person name="Baba S."/>
            <person name="Ankai A."/>
            <person name="Kosugi H."/>
            <person name="Hosoyama A."/>
            <person name="Fukui S."/>
            <person name="Nagai Y."/>
            <person name="Nishijima K."/>
            <person name="Otsuka R."/>
            <person name="Nakazawa H."/>
            <person name="Takamiya M."/>
            <person name="Kato Y."/>
            <person name="Yoshizawa T."/>
            <person name="Tanaka T."/>
            <person name="Kudoh Y."/>
            <person name="Yamazaki J."/>
            <person name="Kushida N."/>
            <person name="Oguchi A."/>
            <person name="Aoki K."/>
            <person name="Masuda S."/>
            <person name="Yanagii M."/>
            <person name="Nishimura M."/>
            <person name="Yamagishi A."/>
            <person name="Oshima T."/>
            <person name="Kikuchi H."/>
        </authorList>
    </citation>
    <scope>NUCLEOTIDE SEQUENCE [LARGE SCALE GENOMIC DNA]</scope>
    <source>
        <strain>DSM 16993 / JCM 10545 / NBRC 100140 / 7</strain>
    </source>
</reference>
<name>LYSX_SULTO</name>
<dbReference type="EC" id="6.3.2.43"/>
<dbReference type="EMBL" id="BA000023">
    <property type="protein sequence ID" value="BAB65148.1"/>
    <property type="molecule type" value="Genomic_DNA"/>
</dbReference>
<dbReference type="RefSeq" id="WP_010978130.1">
    <property type="nucleotide sequence ID" value="NC_003106.2"/>
</dbReference>
<dbReference type="SMR" id="Q976J9"/>
<dbReference type="STRING" id="273063.STK_01920"/>
<dbReference type="GeneID" id="1458076"/>
<dbReference type="KEGG" id="sto:STK_01920"/>
<dbReference type="PATRIC" id="fig|273063.9.peg.235"/>
<dbReference type="eggNOG" id="arCOG01589">
    <property type="taxonomic scope" value="Archaea"/>
</dbReference>
<dbReference type="OrthoDB" id="33241at2157"/>
<dbReference type="UniPathway" id="UPA00033">
    <property type="reaction ID" value="UER00035"/>
</dbReference>
<dbReference type="Proteomes" id="UP000001015">
    <property type="component" value="Chromosome"/>
</dbReference>
<dbReference type="GO" id="GO:0005737">
    <property type="term" value="C:cytoplasm"/>
    <property type="evidence" value="ECO:0007669"/>
    <property type="project" value="TreeGrafter"/>
</dbReference>
<dbReference type="GO" id="GO:0005524">
    <property type="term" value="F:ATP binding"/>
    <property type="evidence" value="ECO:0007669"/>
    <property type="project" value="UniProtKB-KW"/>
</dbReference>
<dbReference type="GO" id="GO:0043774">
    <property type="term" value="F:coenzyme F420-2 alpha-glutamyl ligase activity"/>
    <property type="evidence" value="ECO:0007669"/>
    <property type="project" value="TreeGrafter"/>
</dbReference>
<dbReference type="GO" id="GO:0046872">
    <property type="term" value="F:metal ion binding"/>
    <property type="evidence" value="ECO:0007669"/>
    <property type="project" value="UniProtKB-KW"/>
</dbReference>
<dbReference type="GO" id="GO:0019878">
    <property type="term" value="P:lysine biosynthetic process via aminoadipic acid"/>
    <property type="evidence" value="ECO:0007669"/>
    <property type="project" value="UniProtKB-UniPathway"/>
</dbReference>
<dbReference type="GO" id="GO:0036211">
    <property type="term" value="P:protein modification process"/>
    <property type="evidence" value="ECO:0007669"/>
    <property type="project" value="InterPro"/>
</dbReference>
<dbReference type="FunFam" id="3.30.1490.20:FF:000025">
    <property type="entry name" value="Alpha-aminoadipate--LysW ligase LysX protein"/>
    <property type="match status" value="1"/>
</dbReference>
<dbReference type="FunFam" id="3.30.470.20:FF:000058">
    <property type="entry name" value="Alpha-aminoadipate--LysW ligase LysX protein"/>
    <property type="match status" value="1"/>
</dbReference>
<dbReference type="Gene3D" id="3.40.50.20">
    <property type="match status" value="1"/>
</dbReference>
<dbReference type="Gene3D" id="3.30.1490.20">
    <property type="entry name" value="ATP-grasp fold, A domain"/>
    <property type="match status" value="1"/>
</dbReference>
<dbReference type="Gene3D" id="3.30.470.20">
    <property type="entry name" value="ATP-grasp fold, B domain"/>
    <property type="match status" value="1"/>
</dbReference>
<dbReference type="InterPro" id="IPR011761">
    <property type="entry name" value="ATP-grasp"/>
</dbReference>
<dbReference type="InterPro" id="IPR013651">
    <property type="entry name" value="ATP-grasp_RimK-type"/>
</dbReference>
<dbReference type="InterPro" id="IPR013815">
    <property type="entry name" value="ATP_grasp_subdomain_1"/>
</dbReference>
<dbReference type="InterPro" id="IPR054562">
    <property type="entry name" value="LysX/ArgX_preATP_grasp"/>
</dbReference>
<dbReference type="InterPro" id="IPR011870">
    <property type="entry name" value="LysX_arch"/>
</dbReference>
<dbReference type="InterPro" id="IPR016185">
    <property type="entry name" value="PreATP-grasp_dom_sf"/>
</dbReference>
<dbReference type="InterPro" id="IPR004666">
    <property type="entry name" value="Rp_bS6_RimK/Lys_biosynth_LsyX"/>
</dbReference>
<dbReference type="NCBIfam" id="TIGR02144">
    <property type="entry name" value="LysX_arch"/>
    <property type="match status" value="1"/>
</dbReference>
<dbReference type="NCBIfam" id="TIGR00768">
    <property type="entry name" value="rimK_fam"/>
    <property type="match status" value="1"/>
</dbReference>
<dbReference type="PANTHER" id="PTHR21621:SF2">
    <property type="entry name" value="COENZYME GAMMA-F420-2:ALPHA-L-GLUTAMATE LIGASE"/>
    <property type="match status" value="1"/>
</dbReference>
<dbReference type="PANTHER" id="PTHR21621">
    <property type="entry name" value="RIBOSOMAL PROTEIN S6 MODIFICATION PROTEIN"/>
    <property type="match status" value="1"/>
</dbReference>
<dbReference type="Pfam" id="PF22626">
    <property type="entry name" value="LysX_preATP_grasp"/>
    <property type="match status" value="1"/>
</dbReference>
<dbReference type="Pfam" id="PF08443">
    <property type="entry name" value="RimK"/>
    <property type="match status" value="1"/>
</dbReference>
<dbReference type="SUPFAM" id="SSF56059">
    <property type="entry name" value="Glutathione synthetase ATP-binding domain-like"/>
    <property type="match status" value="1"/>
</dbReference>
<dbReference type="SUPFAM" id="SSF52440">
    <property type="entry name" value="PreATP-grasp domain"/>
    <property type="match status" value="1"/>
</dbReference>
<dbReference type="PROSITE" id="PS50975">
    <property type="entry name" value="ATP_GRASP"/>
    <property type="match status" value="1"/>
</dbReference>
<organism>
    <name type="scientific">Sulfurisphaera tokodaii (strain DSM 16993 / JCM 10545 / NBRC 100140 / 7)</name>
    <name type="common">Sulfolobus tokodaii</name>
    <dbReference type="NCBI Taxonomy" id="273063"/>
    <lineage>
        <taxon>Archaea</taxon>
        <taxon>Thermoproteota</taxon>
        <taxon>Thermoprotei</taxon>
        <taxon>Sulfolobales</taxon>
        <taxon>Sulfolobaceae</taxon>
        <taxon>Sulfurisphaera</taxon>
    </lineage>
</organism>
<comment type="function">
    <text evidence="2">Catalyzes the ATP-dependent formation of a covalent bond between the amino group of alpha-aminoadipate (AAA) and the gamma-carboxyl group of the C-terminal glutamate residue in LysW.</text>
</comment>
<comment type="catalytic activity">
    <reaction evidence="2">
        <text>[amino-group carrier protein]-C-terminal-L-glutamate + L-2-aminoadipate + ATP = [amino-group carrier protein]-C-terminal-N-(1,4-dicarboxybutan-1-yl)-L-glutamine + ADP + phosphate + H(+)</text>
        <dbReference type="Rhea" id="RHEA:41940"/>
        <dbReference type="Rhea" id="RHEA-COMP:9693"/>
        <dbReference type="Rhea" id="RHEA-COMP:9694"/>
        <dbReference type="ChEBI" id="CHEBI:15378"/>
        <dbReference type="ChEBI" id="CHEBI:30616"/>
        <dbReference type="ChEBI" id="CHEBI:43474"/>
        <dbReference type="ChEBI" id="CHEBI:58672"/>
        <dbReference type="ChEBI" id="CHEBI:78503"/>
        <dbReference type="ChEBI" id="CHEBI:78525"/>
        <dbReference type="ChEBI" id="CHEBI:456216"/>
        <dbReference type="EC" id="6.3.2.43"/>
    </reaction>
</comment>
<comment type="cofactor">
    <cofactor evidence="1">
        <name>Mg(2+)</name>
        <dbReference type="ChEBI" id="CHEBI:18420"/>
    </cofactor>
    <text evidence="1">Binds 2 magnesium ions per subunit.</text>
</comment>
<comment type="pathway">
    <text>Amino-acid biosynthesis; L-lysine biosynthesis via AAA pathway; L-lysine from L-alpha-aminoadipate (Thermus route): step 1/5.</text>
</comment>
<comment type="subunit">
    <text evidence="1">Homodimer.</text>
</comment>
<comment type="similarity">
    <text evidence="4">Belongs to the RimK family. LysX subfamily.</text>
</comment>
<feature type="chain" id="PRO_0000205501" description="Alpha-aminoadipate--LysW ligase LysX">
    <location>
        <begin position="1"/>
        <end position="285"/>
    </location>
</feature>
<feature type="domain" description="ATP-grasp" evidence="3">
    <location>
        <begin position="95"/>
        <end position="280"/>
    </location>
</feature>
<feature type="short sequence motif" description="N-[TS] motif that is essential for LysX substrate specificity">
    <location>
        <begin position="262"/>
        <end position="263"/>
    </location>
</feature>
<feature type="binding site" evidence="1">
    <location>
        <position position="91"/>
    </location>
    <ligand>
        <name>ATP</name>
        <dbReference type="ChEBI" id="CHEBI:30616"/>
    </ligand>
</feature>
<feature type="binding site" evidence="1">
    <location>
        <position position="131"/>
    </location>
    <ligand>
        <name>ATP</name>
        <dbReference type="ChEBI" id="CHEBI:30616"/>
    </ligand>
</feature>
<feature type="binding site" evidence="3">
    <location>
        <begin position="135"/>
        <end position="141"/>
    </location>
    <ligand>
        <name>ATP</name>
        <dbReference type="ChEBI" id="CHEBI:30616"/>
    </ligand>
</feature>
<feature type="binding site" evidence="3">
    <location>
        <begin position="171"/>
        <end position="182"/>
    </location>
    <ligand>
        <name>ATP</name>
        <dbReference type="ChEBI" id="CHEBI:30616"/>
    </ligand>
</feature>
<feature type="binding site" evidence="1">
    <location>
        <position position="196"/>
    </location>
    <ligand>
        <name>ATP</name>
        <dbReference type="ChEBI" id="CHEBI:30616"/>
    </ligand>
</feature>
<feature type="binding site" evidence="1">
    <location>
        <position position="205"/>
    </location>
    <ligand>
        <name>ATP</name>
        <dbReference type="ChEBI" id="CHEBI:30616"/>
    </ligand>
</feature>
<feature type="binding site" evidence="1">
    <location>
        <position position="240"/>
    </location>
    <ligand>
        <name>Mg(2+)</name>
        <dbReference type="ChEBI" id="CHEBI:18420"/>
        <label>1</label>
    </ligand>
</feature>
<feature type="binding site" evidence="1">
    <location>
        <position position="253"/>
    </location>
    <ligand>
        <name>Mg(2+)</name>
        <dbReference type="ChEBI" id="CHEBI:18420"/>
        <label>1</label>
    </ligand>
</feature>
<feature type="binding site" evidence="1">
    <location>
        <position position="253"/>
    </location>
    <ligand>
        <name>Mg(2+)</name>
        <dbReference type="ChEBI" id="CHEBI:18420"/>
        <label>2</label>
    </ligand>
</feature>
<feature type="binding site" evidence="1">
    <location>
        <position position="255"/>
    </location>
    <ligand>
        <name>Mg(2+)</name>
        <dbReference type="ChEBI" id="CHEBI:18420"/>
        <label>2</label>
    </ligand>
</feature>
<protein>
    <recommendedName>
        <fullName>Alpha-aminoadipate--LysW ligase LysX</fullName>
        <shortName>AAA--LysW ligase LysX</shortName>
        <ecNumber>6.3.2.43</ecNumber>
    </recommendedName>
</protein>
<accession>Q976J9</accession>
<proteinExistence type="inferred from homology"/>
<sequence>MILGVIYDLLRWEEKNLIQEARKLGHTVIPIYTKDFYYFYNNDSNETLGDLDVVIQRNTSHARAVITSTIFENLSYKTINDSSTLIKCENKLYTLSLLSKHGIRVPKTIVAFSKEKALELANKLSYPVVIKPVEGSWGRMVARAIDEDTLRNFLEYQEYTTLQFRYIYLIQEFVKKPDRDIRIFTIGDEAPVGIYRVNSRNWKTNTALGAKAEPLKIDEELQDLALKVKDIIGGFFLGIDVFEDPERGYIINEVNGVPEYKNTVRVNNFNVSEYLIRKIEEWIKK</sequence>